<comment type="function">
    <text evidence="8">May act as a transcriptional activator. Differentiation factor required for neurogenesis. Acts as an upstream activator of isl1.</text>
</comment>
<comment type="subunit">
    <text evidence="2">Efficient DNA binding requires dimerization with another bHLH protein.</text>
</comment>
<comment type="subcellular location">
    <subcellularLocation>
        <location evidence="3">Cytoplasm</location>
    </subcellularLocation>
    <subcellularLocation>
        <location evidence="3 5">Nucleus</location>
    </subcellularLocation>
</comment>
<comment type="tissue specificity">
    <text evidence="7 9 10 11">In the embryo, expressed broadly in a subset of primary neurons in the brain and spinal cord. At 28 hours post-fertilization (hpf), regions of expression include telencephalon, olfactory placode, epiphysis, cranial ganglia, acoustic ganglia, Rohon-Beard mechano-sensory neurons and motoneurons. In 2 day postembryonic brain, expressed in many brain regions but absent from subpallium, the ventral preoptic region, ventral thalamus and hypothalamus; sites of expression extend laterally from the ventricular proliferative regions and correspond to freshly determined cell populations. In adult, expressed in all tissues examined with highest levels in brain.</text>
</comment>
<comment type="developmental stage">
    <text evidence="7 10 11">First detected at 10 hpf (1-somite stage), with increased levels during subsequent embryonic development. Also expressed in adult.</text>
</comment>
<organism>
    <name type="scientific">Danio rerio</name>
    <name type="common">Zebrafish</name>
    <name type="synonym">Brachydanio rerio</name>
    <dbReference type="NCBI Taxonomy" id="7955"/>
    <lineage>
        <taxon>Eukaryota</taxon>
        <taxon>Metazoa</taxon>
        <taxon>Chordata</taxon>
        <taxon>Craniata</taxon>
        <taxon>Vertebrata</taxon>
        <taxon>Euteleostomi</taxon>
        <taxon>Actinopterygii</taxon>
        <taxon>Neopterygii</taxon>
        <taxon>Teleostei</taxon>
        <taxon>Ostariophysi</taxon>
        <taxon>Cypriniformes</taxon>
        <taxon>Danionidae</taxon>
        <taxon>Danioninae</taxon>
        <taxon>Danio</taxon>
    </lineage>
</organism>
<dbReference type="EMBL" id="AF017302">
    <property type="protein sequence ID" value="AAB70529.1"/>
    <property type="molecule type" value="Genomic_DNA"/>
</dbReference>
<dbReference type="EMBL" id="AF036148">
    <property type="protein sequence ID" value="AAB88820.1"/>
    <property type="molecule type" value="mRNA"/>
</dbReference>
<dbReference type="EMBL" id="BC056603">
    <property type="protein sequence ID" value="AAH56603.1"/>
    <property type="molecule type" value="mRNA"/>
</dbReference>
<dbReference type="RefSeq" id="NP_571053.1">
    <property type="nucleotide sequence ID" value="NM_130978.2"/>
</dbReference>
<dbReference type="SMR" id="O42202"/>
<dbReference type="FunCoup" id="O42202">
    <property type="interactions" value="75"/>
</dbReference>
<dbReference type="STRING" id="7955.ENSDARP00000026490"/>
<dbReference type="PaxDb" id="7955-ENSDARP00000026490"/>
<dbReference type="Ensembl" id="ENSDART00000011837">
    <property type="protein sequence ID" value="ENSDARP00000026490"/>
    <property type="gene ID" value="ENSDARG00000019566"/>
</dbReference>
<dbReference type="GeneID" id="30169"/>
<dbReference type="KEGG" id="dre:30169"/>
<dbReference type="AGR" id="ZFIN:ZDB-GENE-990415-172"/>
<dbReference type="CTD" id="4760"/>
<dbReference type="ZFIN" id="ZDB-GENE-990415-172">
    <property type="gene designation" value="neurod1"/>
</dbReference>
<dbReference type="eggNOG" id="KOG3898">
    <property type="taxonomic scope" value="Eukaryota"/>
</dbReference>
<dbReference type="InParanoid" id="O42202"/>
<dbReference type="OMA" id="SFKHEPA"/>
<dbReference type="OrthoDB" id="10039134at2759"/>
<dbReference type="PhylomeDB" id="O42202"/>
<dbReference type="TreeFam" id="TF315153"/>
<dbReference type="PRO" id="PR:O42202"/>
<dbReference type="Proteomes" id="UP000000437">
    <property type="component" value="Chromosome 9"/>
</dbReference>
<dbReference type="Bgee" id="ENSDARG00000019566">
    <property type="expression patterns" value="Expressed in ganglion and 94 other cell types or tissues"/>
</dbReference>
<dbReference type="GO" id="GO:0005737">
    <property type="term" value="C:cytoplasm"/>
    <property type="evidence" value="ECO:0007669"/>
    <property type="project" value="UniProtKB-SubCell"/>
</dbReference>
<dbReference type="GO" id="GO:0005634">
    <property type="term" value="C:nucleus"/>
    <property type="evidence" value="ECO:0000318"/>
    <property type="project" value="GO_Central"/>
</dbReference>
<dbReference type="GO" id="GO:0000981">
    <property type="term" value="F:DNA-binding transcription factor activity, RNA polymerase II-specific"/>
    <property type="evidence" value="ECO:0000318"/>
    <property type="project" value="GO_Central"/>
</dbReference>
<dbReference type="GO" id="GO:0070888">
    <property type="term" value="F:E-box binding"/>
    <property type="evidence" value="ECO:0000318"/>
    <property type="project" value="GO_Central"/>
</dbReference>
<dbReference type="GO" id="GO:0046983">
    <property type="term" value="F:protein dimerization activity"/>
    <property type="evidence" value="ECO:0007669"/>
    <property type="project" value="InterPro"/>
</dbReference>
<dbReference type="GO" id="GO:0061564">
    <property type="term" value="P:axon development"/>
    <property type="evidence" value="ECO:0000318"/>
    <property type="project" value="GO_Central"/>
</dbReference>
<dbReference type="GO" id="GO:0062139">
    <property type="term" value="P:camera-type eye photoreceptor cell development"/>
    <property type="evidence" value="ECO:0000315"/>
    <property type="project" value="ZFIN"/>
</dbReference>
<dbReference type="GO" id="GO:0031018">
    <property type="term" value="P:endocrine pancreas development"/>
    <property type="evidence" value="ECO:0000315"/>
    <property type="project" value="ZFIN"/>
</dbReference>
<dbReference type="GO" id="GO:0060119">
    <property type="term" value="P:inner ear receptor cell development"/>
    <property type="evidence" value="ECO:0000315"/>
    <property type="project" value="ZFIN"/>
</dbReference>
<dbReference type="GO" id="GO:0045746">
    <property type="term" value="P:negative regulation of Notch signaling pathway"/>
    <property type="evidence" value="ECO:0000315"/>
    <property type="project" value="ZFIN"/>
</dbReference>
<dbReference type="GO" id="GO:0045944">
    <property type="term" value="P:positive regulation of transcription by RNA polymerase II"/>
    <property type="evidence" value="ECO:0000318"/>
    <property type="project" value="GO_Central"/>
</dbReference>
<dbReference type="GO" id="GO:0048923">
    <property type="term" value="P:posterior lateral line neuromast hair cell differentiation"/>
    <property type="evidence" value="ECO:0000315"/>
    <property type="project" value="ZFIN"/>
</dbReference>
<dbReference type="GO" id="GO:0031099">
    <property type="term" value="P:regeneration"/>
    <property type="evidence" value="ECO:0000315"/>
    <property type="project" value="ZFIN"/>
</dbReference>
<dbReference type="GO" id="GO:0007423">
    <property type="term" value="P:sensory organ development"/>
    <property type="evidence" value="ECO:0000318"/>
    <property type="project" value="GO_Central"/>
</dbReference>
<dbReference type="CDD" id="cd19722">
    <property type="entry name" value="bHLH_TS_NeuroD6_ATOH2"/>
    <property type="match status" value="1"/>
</dbReference>
<dbReference type="FunFam" id="4.10.280.10:FF:000006">
    <property type="entry name" value="Neurogenic differentiation factor"/>
    <property type="match status" value="1"/>
</dbReference>
<dbReference type="Gene3D" id="4.10.280.10">
    <property type="entry name" value="Helix-loop-helix DNA-binding domain"/>
    <property type="match status" value="1"/>
</dbReference>
<dbReference type="InterPro" id="IPR011598">
    <property type="entry name" value="bHLH_dom"/>
</dbReference>
<dbReference type="InterPro" id="IPR050359">
    <property type="entry name" value="bHLH_transcription_factors"/>
</dbReference>
<dbReference type="InterPro" id="IPR036638">
    <property type="entry name" value="HLH_DNA-bd_sf"/>
</dbReference>
<dbReference type="InterPro" id="IPR022575">
    <property type="entry name" value="NeuroD_DUF"/>
</dbReference>
<dbReference type="InterPro" id="IPR016637">
    <property type="entry name" value="TF_bHLH_NeuroD"/>
</dbReference>
<dbReference type="PANTHER" id="PTHR19290">
    <property type="entry name" value="BASIC HELIX-LOOP-HELIX PROTEIN NEUROGENIN-RELATED"/>
    <property type="match status" value="1"/>
</dbReference>
<dbReference type="PANTHER" id="PTHR19290:SF88">
    <property type="entry name" value="NEUROGENIC DIFFERENTIATION FACTOR 1"/>
    <property type="match status" value="1"/>
</dbReference>
<dbReference type="Pfam" id="PF00010">
    <property type="entry name" value="HLH"/>
    <property type="match status" value="1"/>
</dbReference>
<dbReference type="Pfam" id="PF12533">
    <property type="entry name" value="Neuro_bHLH"/>
    <property type="match status" value="1"/>
</dbReference>
<dbReference type="PIRSF" id="PIRSF015618">
    <property type="entry name" value="bHLH_NeuroD"/>
    <property type="match status" value="1"/>
</dbReference>
<dbReference type="SMART" id="SM00353">
    <property type="entry name" value="HLH"/>
    <property type="match status" value="1"/>
</dbReference>
<dbReference type="SUPFAM" id="SSF47459">
    <property type="entry name" value="HLH, helix-loop-helix DNA-binding domain"/>
    <property type="match status" value="1"/>
</dbReference>
<dbReference type="PROSITE" id="PS50888">
    <property type="entry name" value="BHLH"/>
    <property type="match status" value="1"/>
</dbReference>
<sequence>MTKSYSEESMMLESQSSSNWTDKCHSSSQDERDVDKTSEPMLNDMEDDDDAGLNRLEDEDDEEEEEEEEDGDDTKPKRRGPKKKKMTKARMQRFKMRRMKANARERNRMHGLNDALESLRKVVPCYSKTQKLSKIETLRLAKNYIWALSEILRSGKSPDLMSFVQALCKGLSQPTTNLVAGCLQLNPRTFLPEQSQEMPPHMQTASASFSALPYSYQTPGLPSPPYGTMDSSHIFHVKPHAYGSALEPFFDTTLTDCTSPSFDGPLSPPLSVNGNFSFKHEPSSEFEKNYAFTMHYQAAGLAGAQGHAASLYAGSTQRCDIPMENIMSYDGHSHHERVMNAQLNAIFHDS</sequence>
<gene>
    <name evidence="1" type="primary">neurod1</name>
    <name evidence="16" type="synonym">neurod</name>
    <name evidence="13" type="synonym">nrd</name>
</gene>
<proteinExistence type="evidence at protein level"/>
<keyword id="KW-0010">Activator</keyword>
<keyword id="KW-0963">Cytoplasm</keyword>
<keyword id="KW-0217">Developmental protein</keyword>
<keyword id="KW-0221">Differentiation</keyword>
<keyword id="KW-0238">DNA-binding</keyword>
<keyword id="KW-0524">Neurogenesis</keyword>
<keyword id="KW-0539">Nucleus</keyword>
<keyword id="KW-1185">Reference proteome</keyword>
<keyword id="KW-0804">Transcription</keyword>
<keyword id="KW-0805">Transcription regulation</keyword>
<feature type="chain" id="PRO_0000274817" description="Neurogenic differentiation factor 1">
    <location>
        <begin position="1"/>
        <end position="350"/>
    </location>
</feature>
<feature type="domain" description="bHLH" evidence="5">
    <location>
        <begin position="96"/>
        <end position="148"/>
    </location>
</feature>
<feature type="region of interest" description="Disordered" evidence="6">
    <location>
        <begin position="1"/>
        <end position="91"/>
    </location>
</feature>
<feature type="short sequence motif" description="Nuclear localization signal" evidence="4">
    <location>
        <begin position="82"/>
        <end position="88"/>
    </location>
</feature>
<feature type="compositionally biased region" description="Low complexity" evidence="6">
    <location>
        <begin position="7"/>
        <end position="18"/>
    </location>
</feature>
<feature type="compositionally biased region" description="Basic and acidic residues" evidence="6">
    <location>
        <begin position="22"/>
        <end position="38"/>
    </location>
</feature>
<feature type="compositionally biased region" description="Acidic residues" evidence="6">
    <location>
        <begin position="44"/>
        <end position="72"/>
    </location>
</feature>
<feature type="compositionally biased region" description="Basic residues" evidence="6">
    <location>
        <begin position="76"/>
        <end position="91"/>
    </location>
</feature>
<feature type="mutagenesis site" description="Reduction in ability to induce ectopic expression of isl1." evidence="8">
    <original>N</original>
    <variation>S</variation>
    <location>
        <position position="107"/>
    </location>
</feature>
<protein>
    <recommendedName>
        <fullName>Neurogenic differentiation factor 1</fullName>
        <shortName>NeuroD</shortName>
        <shortName>NeuroD1</shortName>
    </recommendedName>
</protein>
<reference evidence="12 13" key="1">
    <citation type="journal article" date="1997" name="Development">
        <title>The activity of neurogenin1 is controlled by local cues in the zebrafish embryo.</title>
        <authorList>
            <person name="Blader P."/>
            <person name="Fischer N."/>
            <person name="Gradwohl G."/>
            <person name="Guillemont F."/>
            <person name="Straehle U."/>
        </authorList>
    </citation>
    <scope>NUCLEOTIDE SEQUENCE [GENOMIC DNA]</scope>
    <scope>TISSUE SPECIFICITY</scope>
    <scope>DEVELOPMENTAL STAGE</scope>
</reference>
<reference evidence="12 14" key="2">
    <citation type="journal article" date="1998" name="Dev. Dyn.">
        <title>Expression of zebrafish bHLH genes ngn1 and nrd defines distinct stages of neural differentiation.</title>
        <authorList>
            <person name="Korzh V."/>
            <person name="Sleptsova I."/>
            <person name="Liao J."/>
            <person name="He J."/>
            <person name="Gong Z."/>
        </authorList>
    </citation>
    <scope>NUCLEOTIDE SEQUENCE [MRNA]</scope>
    <scope>TISSUE SPECIFICITY</scope>
    <scope>DEVELOPMENTAL STAGE</scope>
    <source>
        <tissue evidence="11">Embryo</tissue>
    </source>
</reference>
<reference evidence="15" key="3">
    <citation type="submission" date="2003-08" db="EMBL/GenBank/DDBJ databases">
        <authorList>
            <consortium name="NIH - Zebrafish Gene Collection (ZGC) project"/>
        </authorList>
    </citation>
    <scope>NUCLEOTIDE SEQUENCE [LARGE SCALE MRNA]</scope>
    <source>
        <tissue evidence="15">Embryo</tissue>
    </source>
</reference>
<reference evidence="12" key="4">
    <citation type="journal article" date="1999" name="DNA Cell Biol.">
        <title>A class of neuroD-related basic helix-loop-helix transcription factors expressed in developing central nervous system in zebrafish.</title>
        <authorList>
            <person name="Liao J."/>
            <person name="He J."/>
            <person name="Yan T."/>
            <person name="Korzh V."/>
            <person name="Gong Z."/>
        </authorList>
    </citation>
    <scope>DEVELOPMENTAL STAGE</scope>
    <scope>TISSUE SPECIFICITY</scope>
</reference>
<reference evidence="12" key="5">
    <citation type="journal article" date="2002" name="FEBS Lett.">
        <title>The functional specificity of NeuroD is defined by a single amino acid residue (N11) in the basic domain.</title>
        <authorList>
            <person name="Wang X."/>
            <person name="Korzh V."/>
            <person name="Gong Z."/>
        </authorList>
    </citation>
    <scope>FUNCTION</scope>
    <scope>MUTAGENESIS OF ASN-107</scope>
</reference>
<reference evidence="12" key="6">
    <citation type="journal article" date="2003" name="Brain Res. Dev. Brain Res.">
        <title>Anatomy of neurogenesis in the early zebrafish brain.</title>
        <authorList>
            <person name="Mueller T."/>
            <person name="Wullimann M.F."/>
        </authorList>
    </citation>
    <scope>TISSUE SPECIFICITY</scope>
</reference>
<accession>O42202</accession>
<name>NDF1_DANRE</name>
<evidence type="ECO:0000250" key="1">
    <source>
        <dbReference type="UniProtKB" id="Q13562"/>
    </source>
</evidence>
<evidence type="ECO:0000250" key="2">
    <source>
        <dbReference type="UniProtKB" id="Q60867"/>
    </source>
</evidence>
<evidence type="ECO:0000250" key="3">
    <source>
        <dbReference type="UniProtKB" id="Q64289"/>
    </source>
</evidence>
<evidence type="ECO:0000255" key="4"/>
<evidence type="ECO:0000255" key="5">
    <source>
        <dbReference type="PROSITE-ProRule" id="PRU00981"/>
    </source>
</evidence>
<evidence type="ECO:0000256" key="6">
    <source>
        <dbReference type="SAM" id="MobiDB-lite"/>
    </source>
</evidence>
<evidence type="ECO:0000269" key="7">
    <source>
    </source>
</evidence>
<evidence type="ECO:0000269" key="8">
    <source>
    </source>
</evidence>
<evidence type="ECO:0000269" key="9">
    <source>
    </source>
</evidence>
<evidence type="ECO:0000269" key="10">
    <source>
    </source>
</evidence>
<evidence type="ECO:0000269" key="11">
    <source>
    </source>
</evidence>
<evidence type="ECO:0000305" key="12"/>
<evidence type="ECO:0000312" key="13">
    <source>
        <dbReference type="EMBL" id="AAB70529.1"/>
    </source>
</evidence>
<evidence type="ECO:0000312" key="14">
    <source>
        <dbReference type="EMBL" id="AAB88820.1"/>
    </source>
</evidence>
<evidence type="ECO:0000312" key="15">
    <source>
        <dbReference type="EMBL" id="AAH56603.1"/>
    </source>
</evidence>
<evidence type="ECO:0000312" key="16">
    <source>
        <dbReference type="ZFIN" id="ZDB-GENE-990415-172"/>
    </source>
</evidence>